<comment type="function">
    <text evidence="1">One of several proteins that assist in the late maturation steps of the functional core of the 30S ribosomal subunit. Associates with free 30S ribosomal subunits (but not with 30S subunits that are part of 70S ribosomes or polysomes). Required for efficient processing of 16S rRNA. May interact with the 5'-terminal helix region of 16S rRNA.</text>
</comment>
<comment type="subunit">
    <text evidence="1">Monomer. Binds 30S ribosomal subunits, but not 50S ribosomal subunits or 70S ribosomes.</text>
</comment>
<comment type="subcellular location">
    <subcellularLocation>
        <location evidence="1">Cytoplasm</location>
    </subcellularLocation>
</comment>
<comment type="similarity">
    <text evidence="1">Belongs to the RbfA family.</text>
</comment>
<protein>
    <recommendedName>
        <fullName evidence="1">Ribosome-binding factor A</fullName>
    </recommendedName>
</protein>
<evidence type="ECO:0000255" key="1">
    <source>
        <dbReference type="HAMAP-Rule" id="MF_00003"/>
    </source>
</evidence>
<gene>
    <name evidence="1" type="primary">rbfA</name>
    <name type="ordered locus">RT0422</name>
</gene>
<name>RBFA_RICTY</name>
<dbReference type="EMBL" id="AE017197">
    <property type="protein sequence ID" value="AAU03899.1"/>
    <property type="molecule type" value="Genomic_DNA"/>
</dbReference>
<dbReference type="RefSeq" id="WP_011190883.1">
    <property type="nucleotide sequence ID" value="NC_006142.1"/>
</dbReference>
<dbReference type="SMR" id="Q68WU3"/>
<dbReference type="KEGG" id="rty:RT0422"/>
<dbReference type="eggNOG" id="COG0858">
    <property type="taxonomic scope" value="Bacteria"/>
</dbReference>
<dbReference type="HOGENOM" id="CLU_089475_1_0_5"/>
<dbReference type="OrthoDB" id="9805051at2"/>
<dbReference type="Proteomes" id="UP000000604">
    <property type="component" value="Chromosome"/>
</dbReference>
<dbReference type="GO" id="GO:0005829">
    <property type="term" value="C:cytosol"/>
    <property type="evidence" value="ECO:0007669"/>
    <property type="project" value="TreeGrafter"/>
</dbReference>
<dbReference type="GO" id="GO:0043024">
    <property type="term" value="F:ribosomal small subunit binding"/>
    <property type="evidence" value="ECO:0007669"/>
    <property type="project" value="TreeGrafter"/>
</dbReference>
<dbReference type="GO" id="GO:0030490">
    <property type="term" value="P:maturation of SSU-rRNA"/>
    <property type="evidence" value="ECO:0007669"/>
    <property type="project" value="UniProtKB-UniRule"/>
</dbReference>
<dbReference type="Gene3D" id="3.30.300.20">
    <property type="match status" value="1"/>
</dbReference>
<dbReference type="HAMAP" id="MF_00003">
    <property type="entry name" value="RbfA"/>
    <property type="match status" value="1"/>
</dbReference>
<dbReference type="InterPro" id="IPR015946">
    <property type="entry name" value="KH_dom-like_a/b"/>
</dbReference>
<dbReference type="InterPro" id="IPR000238">
    <property type="entry name" value="RbfA"/>
</dbReference>
<dbReference type="InterPro" id="IPR023799">
    <property type="entry name" value="RbfA_dom_sf"/>
</dbReference>
<dbReference type="InterPro" id="IPR020053">
    <property type="entry name" value="Ribosome-bd_factorA_CS"/>
</dbReference>
<dbReference type="NCBIfam" id="NF001799">
    <property type="entry name" value="PRK00521.2-2"/>
    <property type="match status" value="1"/>
</dbReference>
<dbReference type="NCBIfam" id="TIGR00082">
    <property type="entry name" value="rbfA"/>
    <property type="match status" value="1"/>
</dbReference>
<dbReference type="PANTHER" id="PTHR33515">
    <property type="entry name" value="RIBOSOME-BINDING FACTOR A, CHLOROPLASTIC-RELATED"/>
    <property type="match status" value="1"/>
</dbReference>
<dbReference type="PANTHER" id="PTHR33515:SF1">
    <property type="entry name" value="RIBOSOME-BINDING FACTOR A, CHLOROPLASTIC-RELATED"/>
    <property type="match status" value="1"/>
</dbReference>
<dbReference type="Pfam" id="PF02033">
    <property type="entry name" value="RBFA"/>
    <property type="match status" value="1"/>
</dbReference>
<dbReference type="SUPFAM" id="SSF89919">
    <property type="entry name" value="Ribosome-binding factor A, RbfA"/>
    <property type="match status" value="1"/>
</dbReference>
<dbReference type="PROSITE" id="PS01319">
    <property type="entry name" value="RBFA"/>
    <property type="match status" value="1"/>
</dbReference>
<proteinExistence type="inferred from homology"/>
<reference key="1">
    <citation type="journal article" date="2004" name="J. Bacteriol.">
        <title>Complete genome sequence of Rickettsia typhi and comparison with sequences of other Rickettsiae.</title>
        <authorList>
            <person name="McLeod M.P."/>
            <person name="Qin X."/>
            <person name="Karpathy S.E."/>
            <person name="Gioia J."/>
            <person name="Highlander S.K."/>
            <person name="Fox G.E."/>
            <person name="McNeill T.Z."/>
            <person name="Jiang H."/>
            <person name="Muzny D."/>
            <person name="Jacob L.S."/>
            <person name="Hawes A.C."/>
            <person name="Sodergren E."/>
            <person name="Gill R."/>
            <person name="Hume J."/>
            <person name="Morgan M."/>
            <person name="Fan G."/>
            <person name="Amin A.G."/>
            <person name="Gibbs R.A."/>
            <person name="Hong C."/>
            <person name="Yu X.-J."/>
            <person name="Walker D.H."/>
            <person name="Weinstock G.M."/>
        </authorList>
    </citation>
    <scope>NUCLEOTIDE SEQUENCE [LARGE SCALE GENOMIC DNA]</scope>
    <source>
        <strain>ATCC VR-144 / Wilmington</strain>
    </source>
</reference>
<feature type="chain" id="PRO_0000102723" description="Ribosome-binding factor A">
    <location>
        <begin position="1"/>
        <end position="127"/>
    </location>
</feature>
<organism>
    <name type="scientific">Rickettsia typhi (strain ATCC VR-144 / Wilmington)</name>
    <dbReference type="NCBI Taxonomy" id="257363"/>
    <lineage>
        <taxon>Bacteria</taxon>
        <taxon>Pseudomonadati</taxon>
        <taxon>Pseudomonadota</taxon>
        <taxon>Alphaproteobacteria</taxon>
        <taxon>Rickettsiales</taxon>
        <taxon>Rickettsiaceae</taxon>
        <taxon>Rickettsieae</taxon>
        <taxon>Rickettsia</taxon>
        <taxon>typhus group</taxon>
    </lineage>
</organism>
<keyword id="KW-0963">Cytoplasm</keyword>
<keyword id="KW-0690">Ribosome biogenesis</keyword>
<accession>Q68WU3</accession>
<sequence length="127" mass="14857">MKKLTKTNSHRQQKLASIINEVLIEILKRGKMLDRRLFDCPLTITKIVVTADLKIANCYFFPFNTKLTFNDIMDALNNSKHAIRNFITNKINMKFSPEIRFHYDYGFDNAIKIEKLLKSSSLKDKTN</sequence>